<sequence length="345" mass="37358">MLPTVNNNIVIALDAMGGDFAPLSVIQGAGFFLDNLVDPGIKVFFHIYGDQKEISPLLLKYRKVSDNSEFTHYSNNVLANDKPSFALRHRKDSSMKAAIEAVKKGKASGMVSSGNTGALMAISRFILGTLPNVYRPAIVSVCPTKAKSFALLDLGANVDCNVDSLFQFALMGSMFAKIALKVDNPEVALLNIGTEEVKGNDSVRGAFKLLKSAPNINFKGYIEASEFLEGNIDVIVADGFVGNVMLKTAEATASTFIDLIKQEMFNSWATKMLVGILLKSKLNKVLMRFNPKIRSGAMFLGLNGIVIKSHGNSDAVSFAHAIKFAVNSINENLNQKIISEVNQVE</sequence>
<organism>
    <name type="scientific">Wolbachia sp. subsp. Brugia malayi (strain TRS)</name>
    <dbReference type="NCBI Taxonomy" id="292805"/>
    <lineage>
        <taxon>Bacteria</taxon>
        <taxon>Pseudomonadati</taxon>
        <taxon>Pseudomonadota</taxon>
        <taxon>Alphaproteobacteria</taxon>
        <taxon>Rickettsiales</taxon>
        <taxon>Anaplasmataceae</taxon>
        <taxon>Wolbachieae</taxon>
        <taxon>Wolbachia</taxon>
    </lineage>
</organism>
<feature type="chain" id="PRO_1000001860" description="Phosphate acyltransferase">
    <location>
        <begin position="1"/>
        <end position="345"/>
    </location>
</feature>
<evidence type="ECO:0000255" key="1">
    <source>
        <dbReference type="HAMAP-Rule" id="MF_00019"/>
    </source>
</evidence>
<keyword id="KW-0963">Cytoplasm</keyword>
<keyword id="KW-0444">Lipid biosynthesis</keyword>
<keyword id="KW-0443">Lipid metabolism</keyword>
<keyword id="KW-0594">Phospholipid biosynthesis</keyword>
<keyword id="KW-1208">Phospholipid metabolism</keyword>
<keyword id="KW-1185">Reference proteome</keyword>
<keyword id="KW-0808">Transferase</keyword>
<dbReference type="EC" id="2.3.1.274" evidence="1"/>
<dbReference type="EMBL" id="AE017321">
    <property type="protein sequence ID" value="AAW71203.1"/>
    <property type="molecule type" value="Genomic_DNA"/>
</dbReference>
<dbReference type="RefSeq" id="WP_011256813.1">
    <property type="nucleotide sequence ID" value="NC_006833.1"/>
</dbReference>
<dbReference type="SMR" id="Q5GS21"/>
<dbReference type="STRING" id="292805.Wbm0615"/>
<dbReference type="KEGG" id="wbm:Wbm0615"/>
<dbReference type="eggNOG" id="COG0416">
    <property type="taxonomic scope" value="Bacteria"/>
</dbReference>
<dbReference type="HOGENOM" id="CLU_039379_1_0_5"/>
<dbReference type="UniPathway" id="UPA00085"/>
<dbReference type="Proteomes" id="UP000000534">
    <property type="component" value="Chromosome"/>
</dbReference>
<dbReference type="GO" id="GO:0005737">
    <property type="term" value="C:cytoplasm"/>
    <property type="evidence" value="ECO:0007669"/>
    <property type="project" value="UniProtKB-SubCell"/>
</dbReference>
<dbReference type="GO" id="GO:0043811">
    <property type="term" value="F:phosphate:acyl-[acyl carrier protein] acyltransferase activity"/>
    <property type="evidence" value="ECO:0007669"/>
    <property type="project" value="UniProtKB-UniRule"/>
</dbReference>
<dbReference type="GO" id="GO:0006633">
    <property type="term" value="P:fatty acid biosynthetic process"/>
    <property type="evidence" value="ECO:0007669"/>
    <property type="project" value="UniProtKB-UniRule"/>
</dbReference>
<dbReference type="GO" id="GO:0008654">
    <property type="term" value="P:phospholipid biosynthetic process"/>
    <property type="evidence" value="ECO:0007669"/>
    <property type="project" value="UniProtKB-KW"/>
</dbReference>
<dbReference type="Gene3D" id="3.40.718.10">
    <property type="entry name" value="Isopropylmalate Dehydrogenase"/>
    <property type="match status" value="1"/>
</dbReference>
<dbReference type="HAMAP" id="MF_00019">
    <property type="entry name" value="PlsX"/>
    <property type="match status" value="1"/>
</dbReference>
<dbReference type="InterPro" id="IPR003664">
    <property type="entry name" value="FA_synthesis"/>
</dbReference>
<dbReference type="InterPro" id="IPR012281">
    <property type="entry name" value="Phospholipid_synth_PlsX-like"/>
</dbReference>
<dbReference type="NCBIfam" id="TIGR00182">
    <property type="entry name" value="plsX"/>
    <property type="match status" value="1"/>
</dbReference>
<dbReference type="PANTHER" id="PTHR30100">
    <property type="entry name" value="FATTY ACID/PHOSPHOLIPID SYNTHESIS PROTEIN PLSX"/>
    <property type="match status" value="1"/>
</dbReference>
<dbReference type="PANTHER" id="PTHR30100:SF1">
    <property type="entry name" value="PHOSPHATE ACYLTRANSFERASE"/>
    <property type="match status" value="1"/>
</dbReference>
<dbReference type="Pfam" id="PF02504">
    <property type="entry name" value="FA_synthesis"/>
    <property type="match status" value="1"/>
</dbReference>
<dbReference type="PIRSF" id="PIRSF002465">
    <property type="entry name" value="Phsphlp_syn_PlsX"/>
    <property type="match status" value="1"/>
</dbReference>
<dbReference type="SUPFAM" id="SSF53659">
    <property type="entry name" value="Isocitrate/Isopropylmalate dehydrogenase-like"/>
    <property type="match status" value="1"/>
</dbReference>
<protein>
    <recommendedName>
        <fullName evidence="1">Phosphate acyltransferase</fullName>
        <ecNumber evidence="1">2.3.1.274</ecNumber>
    </recommendedName>
    <alternativeName>
        <fullName evidence="1">Acyl-ACP phosphotransacylase</fullName>
    </alternativeName>
    <alternativeName>
        <fullName evidence="1">Acyl-[acyl-carrier-protein]--phosphate acyltransferase</fullName>
    </alternativeName>
    <alternativeName>
        <fullName evidence="1">Phosphate-acyl-ACP acyltransferase</fullName>
    </alternativeName>
</protein>
<gene>
    <name evidence="1" type="primary">plsX</name>
    <name type="ordered locus">Wbm0615</name>
</gene>
<accession>Q5GS21</accession>
<name>PLSX_WOLTR</name>
<reference key="1">
    <citation type="journal article" date="2005" name="PLoS Biol.">
        <title>The Wolbachia genome of Brugia malayi: endosymbiont evolution within a human pathogenic nematode.</title>
        <authorList>
            <person name="Foster J."/>
            <person name="Ganatra M."/>
            <person name="Kamal I."/>
            <person name="Ware J."/>
            <person name="Makarova K."/>
            <person name="Ivanova N."/>
            <person name="Bhattacharyya A."/>
            <person name="Kapatral V."/>
            <person name="Kumar S."/>
            <person name="Posfai J."/>
            <person name="Vincze T."/>
            <person name="Ingram J."/>
            <person name="Moran L."/>
            <person name="Lapidus A."/>
            <person name="Omelchenko M."/>
            <person name="Kyrpides N."/>
            <person name="Ghedin E."/>
            <person name="Wang S."/>
            <person name="Goltsman E."/>
            <person name="Joukov V."/>
            <person name="Ostrovskaya O."/>
            <person name="Tsukerman K."/>
            <person name="Mazur M."/>
            <person name="Comb D."/>
            <person name="Koonin E."/>
            <person name="Slatko B."/>
        </authorList>
    </citation>
    <scope>NUCLEOTIDE SEQUENCE [LARGE SCALE GENOMIC DNA]</scope>
    <source>
        <strain>TRS</strain>
    </source>
</reference>
<proteinExistence type="inferred from homology"/>
<comment type="function">
    <text evidence="1">Catalyzes the reversible formation of acyl-phosphate (acyl-PO(4)) from acyl-[acyl-carrier-protein] (acyl-ACP). This enzyme utilizes acyl-ACP as fatty acyl donor, but not acyl-CoA.</text>
</comment>
<comment type="catalytic activity">
    <reaction evidence="1">
        <text>a fatty acyl-[ACP] + phosphate = an acyl phosphate + holo-[ACP]</text>
        <dbReference type="Rhea" id="RHEA:42292"/>
        <dbReference type="Rhea" id="RHEA-COMP:9685"/>
        <dbReference type="Rhea" id="RHEA-COMP:14125"/>
        <dbReference type="ChEBI" id="CHEBI:43474"/>
        <dbReference type="ChEBI" id="CHEBI:59918"/>
        <dbReference type="ChEBI" id="CHEBI:64479"/>
        <dbReference type="ChEBI" id="CHEBI:138651"/>
        <dbReference type="EC" id="2.3.1.274"/>
    </reaction>
</comment>
<comment type="pathway">
    <text evidence="1">Lipid metabolism; phospholipid metabolism.</text>
</comment>
<comment type="subunit">
    <text evidence="1">Homodimer. Probably interacts with PlsY.</text>
</comment>
<comment type="subcellular location">
    <subcellularLocation>
        <location evidence="1">Cytoplasm</location>
    </subcellularLocation>
    <text evidence="1">Associated with the membrane possibly through PlsY.</text>
</comment>
<comment type="similarity">
    <text evidence="1">Belongs to the PlsX family.</text>
</comment>